<sequence length="465" mass="53168">MKDVVLVKSLYRNTSEYSDKKVKISGWIRTLRASNAFGFIEVNDGSFFKNVQVVFDSAKISNYKEISKLPISSSISVIGTLVETPDSKQPFEIQAEEIIVEGMSDSDYPLQKKRHTFEYLRTIAHLRPRSNAFSATFRVRSVAAYAIHKFFQDQGFVYTHTPILTGSDCEGAGEMFRVTTLDMMAPPIAEEGGIDFSQDFFGKETNLTVSGQLNAECFALAFRNIYTFGPTFRAENSNTVKHAAEFWMIEPEMAFADLIDDMEVAENMLKYVIKYVMDECPEEIAFFNQFVDKGLLERLNHVVNSEFGKVTYTEAVKLLQESGKEFEYPVEWGIDLQTEHERYLTEQIFKKPVFVTDYPKDIKAFYMRLNEDGKTVAAMDCLVPGIGEIIGGSQREERLDVLKARMAELNLNEEDYWWYLELRKYGETVHSGFGLGFERLIMYITGMANIRDVIPFPRTTGTAEF</sequence>
<organism>
    <name type="scientific">Clostridium perfringens (strain ATCC 13124 / DSM 756 / JCM 1290 / NCIMB 6125 / NCTC 8237 / Type A)</name>
    <dbReference type="NCBI Taxonomy" id="195103"/>
    <lineage>
        <taxon>Bacteria</taxon>
        <taxon>Bacillati</taxon>
        <taxon>Bacillota</taxon>
        <taxon>Clostridia</taxon>
        <taxon>Eubacteriales</taxon>
        <taxon>Clostridiaceae</taxon>
        <taxon>Clostridium</taxon>
    </lineage>
</organism>
<accession>Q0TMF3</accession>
<gene>
    <name evidence="1" type="primary">asnS</name>
    <name type="ordered locus">CPF_2823</name>
</gene>
<name>SYN_CLOP1</name>
<feature type="chain" id="PRO_1000128206" description="Asparagine--tRNA ligase">
    <location>
        <begin position="1"/>
        <end position="465"/>
    </location>
</feature>
<dbReference type="EC" id="6.1.1.22" evidence="1"/>
<dbReference type="EMBL" id="CP000246">
    <property type="protein sequence ID" value="ABG82582.1"/>
    <property type="molecule type" value="Genomic_DNA"/>
</dbReference>
<dbReference type="RefSeq" id="WP_003450738.1">
    <property type="nucleotide sequence ID" value="NC_008261.1"/>
</dbReference>
<dbReference type="SMR" id="Q0TMF3"/>
<dbReference type="STRING" id="195103.CPF_2823"/>
<dbReference type="PaxDb" id="195103-CPF_2823"/>
<dbReference type="GeneID" id="93000896"/>
<dbReference type="KEGG" id="cpf:CPF_2823"/>
<dbReference type="eggNOG" id="COG0017">
    <property type="taxonomic scope" value="Bacteria"/>
</dbReference>
<dbReference type="HOGENOM" id="CLU_004553_2_0_9"/>
<dbReference type="Proteomes" id="UP000001823">
    <property type="component" value="Chromosome"/>
</dbReference>
<dbReference type="GO" id="GO:0005737">
    <property type="term" value="C:cytoplasm"/>
    <property type="evidence" value="ECO:0007669"/>
    <property type="project" value="UniProtKB-SubCell"/>
</dbReference>
<dbReference type="GO" id="GO:0004816">
    <property type="term" value="F:asparagine-tRNA ligase activity"/>
    <property type="evidence" value="ECO:0007669"/>
    <property type="project" value="UniProtKB-UniRule"/>
</dbReference>
<dbReference type="GO" id="GO:0005524">
    <property type="term" value="F:ATP binding"/>
    <property type="evidence" value="ECO:0007669"/>
    <property type="project" value="UniProtKB-UniRule"/>
</dbReference>
<dbReference type="GO" id="GO:0140096">
    <property type="term" value="F:catalytic activity, acting on a protein"/>
    <property type="evidence" value="ECO:0007669"/>
    <property type="project" value="UniProtKB-ARBA"/>
</dbReference>
<dbReference type="GO" id="GO:0003676">
    <property type="term" value="F:nucleic acid binding"/>
    <property type="evidence" value="ECO:0007669"/>
    <property type="project" value="InterPro"/>
</dbReference>
<dbReference type="GO" id="GO:0016740">
    <property type="term" value="F:transferase activity"/>
    <property type="evidence" value="ECO:0007669"/>
    <property type="project" value="UniProtKB-ARBA"/>
</dbReference>
<dbReference type="GO" id="GO:0006421">
    <property type="term" value="P:asparaginyl-tRNA aminoacylation"/>
    <property type="evidence" value="ECO:0007669"/>
    <property type="project" value="UniProtKB-UniRule"/>
</dbReference>
<dbReference type="CDD" id="cd00776">
    <property type="entry name" value="AsxRS_core"/>
    <property type="match status" value="1"/>
</dbReference>
<dbReference type="CDD" id="cd04318">
    <property type="entry name" value="EcAsnRS_like_N"/>
    <property type="match status" value="1"/>
</dbReference>
<dbReference type="FunFam" id="3.30.930.10:FF:000016">
    <property type="entry name" value="Asparagine--tRNA ligase"/>
    <property type="match status" value="1"/>
</dbReference>
<dbReference type="Gene3D" id="3.30.930.10">
    <property type="entry name" value="Bira Bifunctional Protein, Domain 2"/>
    <property type="match status" value="1"/>
</dbReference>
<dbReference type="Gene3D" id="2.40.50.140">
    <property type="entry name" value="Nucleic acid-binding proteins"/>
    <property type="match status" value="1"/>
</dbReference>
<dbReference type="HAMAP" id="MF_00534">
    <property type="entry name" value="Asn_tRNA_synth"/>
    <property type="match status" value="1"/>
</dbReference>
<dbReference type="InterPro" id="IPR004364">
    <property type="entry name" value="Aa-tRNA-synt_II"/>
</dbReference>
<dbReference type="InterPro" id="IPR006195">
    <property type="entry name" value="aa-tRNA-synth_II"/>
</dbReference>
<dbReference type="InterPro" id="IPR045864">
    <property type="entry name" value="aa-tRNA-synth_II/BPL/LPL"/>
</dbReference>
<dbReference type="InterPro" id="IPR004522">
    <property type="entry name" value="Asn-tRNA-ligase"/>
</dbReference>
<dbReference type="InterPro" id="IPR002312">
    <property type="entry name" value="Asp/Asn-tRNA-synth_IIb"/>
</dbReference>
<dbReference type="InterPro" id="IPR012340">
    <property type="entry name" value="NA-bd_OB-fold"/>
</dbReference>
<dbReference type="InterPro" id="IPR004365">
    <property type="entry name" value="NA-bd_OB_tRNA"/>
</dbReference>
<dbReference type="NCBIfam" id="TIGR00457">
    <property type="entry name" value="asnS"/>
    <property type="match status" value="1"/>
</dbReference>
<dbReference type="NCBIfam" id="NF003037">
    <property type="entry name" value="PRK03932.1"/>
    <property type="match status" value="1"/>
</dbReference>
<dbReference type="PANTHER" id="PTHR22594:SF34">
    <property type="entry name" value="ASPARAGINE--TRNA LIGASE, MITOCHONDRIAL-RELATED"/>
    <property type="match status" value="1"/>
</dbReference>
<dbReference type="PANTHER" id="PTHR22594">
    <property type="entry name" value="ASPARTYL/LYSYL-TRNA SYNTHETASE"/>
    <property type="match status" value="1"/>
</dbReference>
<dbReference type="Pfam" id="PF00152">
    <property type="entry name" value="tRNA-synt_2"/>
    <property type="match status" value="1"/>
</dbReference>
<dbReference type="Pfam" id="PF01336">
    <property type="entry name" value="tRNA_anti-codon"/>
    <property type="match status" value="1"/>
</dbReference>
<dbReference type="PRINTS" id="PR01042">
    <property type="entry name" value="TRNASYNTHASP"/>
</dbReference>
<dbReference type="SUPFAM" id="SSF55681">
    <property type="entry name" value="Class II aaRS and biotin synthetases"/>
    <property type="match status" value="1"/>
</dbReference>
<dbReference type="SUPFAM" id="SSF50249">
    <property type="entry name" value="Nucleic acid-binding proteins"/>
    <property type="match status" value="1"/>
</dbReference>
<dbReference type="PROSITE" id="PS50862">
    <property type="entry name" value="AA_TRNA_LIGASE_II"/>
    <property type="match status" value="1"/>
</dbReference>
<proteinExistence type="inferred from homology"/>
<evidence type="ECO:0000255" key="1">
    <source>
        <dbReference type="HAMAP-Rule" id="MF_00534"/>
    </source>
</evidence>
<reference key="1">
    <citation type="journal article" date="2006" name="Genome Res.">
        <title>Skewed genomic variability in strains of the toxigenic bacterial pathogen, Clostridium perfringens.</title>
        <authorList>
            <person name="Myers G.S.A."/>
            <person name="Rasko D.A."/>
            <person name="Cheung J.K."/>
            <person name="Ravel J."/>
            <person name="Seshadri R."/>
            <person name="DeBoy R.T."/>
            <person name="Ren Q."/>
            <person name="Varga J."/>
            <person name="Awad M.M."/>
            <person name="Brinkac L.M."/>
            <person name="Daugherty S.C."/>
            <person name="Haft D.H."/>
            <person name="Dodson R.J."/>
            <person name="Madupu R."/>
            <person name="Nelson W.C."/>
            <person name="Rosovitz M.J."/>
            <person name="Sullivan S.A."/>
            <person name="Khouri H."/>
            <person name="Dimitrov G.I."/>
            <person name="Watkins K.L."/>
            <person name="Mulligan S."/>
            <person name="Benton J."/>
            <person name="Radune D."/>
            <person name="Fisher D.J."/>
            <person name="Atkins H.S."/>
            <person name="Hiscox T."/>
            <person name="Jost B.H."/>
            <person name="Billington S.J."/>
            <person name="Songer J.G."/>
            <person name="McClane B.A."/>
            <person name="Titball R.W."/>
            <person name="Rood J.I."/>
            <person name="Melville S.B."/>
            <person name="Paulsen I.T."/>
        </authorList>
    </citation>
    <scope>NUCLEOTIDE SEQUENCE [LARGE SCALE GENOMIC DNA]</scope>
    <source>
        <strain>ATCC 13124 / DSM 756 / JCM 1290 / NCIMB 6125 / NCTC 8237 / S 107 / Type A</strain>
    </source>
</reference>
<comment type="catalytic activity">
    <reaction evidence="1">
        <text>tRNA(Asn) + L-asparagine + ATP = L-asparaginyl-tRNA(Asn) + AMP + diphosphate + H(+)</text>
        <dbReference type="Rhea" id="RHEA:11180"/>
        <dbReference type="Rhea" id="RHEA-COMP:9659"/>
        <dbReference type="Rhea" id="RHEA-COMP:9674"/>
        <dbReference type="ChEBI" id="CHEBI:15378"/>
        <dbReference type="ChEBI" id="CHEBI:30616"/>
        <dbReference type="ChEBI" id="CHEBI:33019"/>
        <dbReference type="ChEBI" id="CHEBI:58048"/>
        <dbReference type="ChEBI" id="CHEBI:78442"/>
        <dbReference type="ChEBI" id="CHEBI:78515"/>
        <dbReference type="ChEBI" id="CHEBI:456215"/>
        <dbReference type="EC" id="6.1.1.22"/>
    </reaction>
</comment>
<comment type="subunit">
    <text evidence="1">Homodimer.</text>
</comment>
<comment type="subcellular location">
    <subcellularLocation>
        <location evidence="1">Cytoplasm</location>
    </subcellularLocation>
</comment>
<comment type="similarity">
    <text evidence="1">Belongs to the class-II aminoacyl-tRNA synthetase family.</text>
</comment>
<keyword id="KW-0030">Aminoacyl-tRNA synthetase</keyword>
<keyword id="KW-0067">ATP-binding</keyword>
<keyword id="KW-0963">Cytoplasm</keyword>
<keyword id="KW-0436">Ligase</keyword>
<keyword id="KW-0547">Nucleotide-binding</keyword>
<keyword id="KW-0648">Protein biosynthesis</keyword>
<protein>
    <recommendedName>
        <fullName evidence="1">Asparagine--tRNA ligase</fullName>
        <ecNumber evidence="1">6.1.1.22</ecNumber>
    </recommendedName>
    <alternativeName>
        <fullName evidence="1">Asparaginyl-tRNA synthetase</fullName>
        <shortName evidence="1">AsnRS</shortName>
    </alternativeName>
</protein>